<keyword id="KW-0903">Direct protein sequencing</keyword>
<keyword id="KW-1015">Disulfide bond</keyword>
<keyword id="KW-0872">Ion channel impairing toxin</keyword>
<keyword id="KW-0960">Knottin</keyword>
<keyword id="KW-0528">Neurotoxin</keyword>
<keyword id="KW-0964">Secreted</keyword>
<keyword id="KW-0732">Signal</keyword>
<keyword id="KW-0800">Toxin</keyword>
<keyword id="KW-0738">Voltage-gated sodium channel impairing toxin</keyword>
<sequence>MTFKLFVVVTLVLAIYVATAEEAMKDDSEPAERGCIKYGDRCGSPHGLPSNCCNDWKYKGRCGCTMGVCTCGPNCPSRGCDWSKKG</sequence>
<comment type="function">
    <text>Toxin active against S.frugiperda larvae. May act on sodium channels (Nav).</text>
</comment>
<comment type="subcellular location">
    <subcellularLocation>
        <location>Secreted</location>
    </subcellularLocation>
</comment>
<comment type="tissue specificity">
    <text>Expressed by the venom gland.</text>
</comment>
<comment type="domain">
    <text evidence="1">The presence of a 'disulfide through disulfide knot' structurally defines this protein as a knottin.</text>
</comment>
<comment type="similarity">
    <text evidence="4">Belongs to the neurotoxin 39 family.</text>
</comment>
<proteinExistence type="evidence at protein level"/>
<protein>
    <recommendedName>
        <fullName>U2-sicaritoxin-Li1a</fullName>
        <shortName>U2-SCRTX-Li1a</shortName>
    </recommendedName>
    <alternativeName>
        <fullName>LiTx3</fullName>
    </alternativeName>
    <alternativeName>
        <fullName>Toxin 3</fullName>
    </alternativeName>
</protein>
<organism>
    <name type="scientific">Loxosceles intermedia</name>
    <name type="common">Brown spider</name>
    <dbReference type="NCBI Taxonomy" id="58218"/>
    <lineage>
        <taxon>Eukaryota</taxon>
        <taxon>Metazoa</taxon>
        <taxon>Ecdysozoa</taxon>
        <taxon>Arthropoda</taxon>
        <taxon>Chelicerata</taxon>
        <taxon>Arachnida</taxon>
        <taxon>Araneae</taxon>
        <taxon>Araneomorphae</taxon>
        <taxon>Haplogynae</taxon>
        <taxon>Scytodoidea</taxon>
        <taxon>Sicariidae</taxon>
        <taxon>Loxosceles</taxon>
    </lineage>
</organism>
<accession>Q6B4T3</accession>
<dbReference type="EMBL" id="AY681977">
    <property type="protein sequence ID" value="AAT85612.1"/>
    <property type="molecule type" value="mRNA"/>
</dbReference>
<dbReference type="ArachnoServer" id="AS000273">
    <property type="toxin name" value="U2-sicaritoxin-Li1a"/>
</dbReference>
<dbReference type="GO" id="GO:0005576">
    <property type="term" value="C:extracellular region"/>
    <property type="evidence" value="ECO:0007669"/>
    <property type="project" value="UniProtKB-SubCell"/>
</dbReference>
<dbReference type="GO" id="GO:0017080">
    <property type="term" value="F:sodium channel regulator activity"/>
    <property type="evidence" value="ECO:0007669"/>
    <property type="project" value="UniProtKB-KW"/>
</dbReference>
<dbReference type="GO" id="GO:0090729">
    <property type="term" value="F:toxin activity"/>
    <property type="evidence" value="ECO:0007669"/>
    <property type="project" value="UniProtKB-KW"/>
</dbReference>
<name>TX3_LOXIN</name>
<evidence type="ECO:0000250" key="1"/>
<evidence type="ECO:0000255" key="2"/>
<evidence type="ECO:0000269" key="3">
    <source>
    </source>
</evidence>
<evidence type="ECO:0000305" key="4"/>
<reference key="1">
    <citation type="journal article" date="2004" name="Toxicon">
        <title>Identification and molecular cloning of insecticidal toxins from the venom of the brown spider Loxosceles intermedia.</title>
        <authorList>
            <person name="de Castro C.S."/>
            <person name="Silvestre F.G."/>
            <person name="Araujo S.C."/>
            <person name="Yazbeck G.M."/>
            <person name="Mangili O.C."/>
            <person name="Cruz I."/>
            <person name="Chavez-Olortegui C."/>
            <person name="Kalapothakis E."/>
        </authorList>
    </citation>
    <scope>NUCLEOTIDE SEQUENCE [MRNA]</scope>
    <scope>PROTEIN SEQUENCE OF 34-50</scope>
    <source>
        <tissue>Venom</tissue>
        <tissue>Venom gland</tissue>
    </source>
</reference>
<feature type="signal peptide" evidence="2">
    <location>
        <begin position="1"/>
        <end position="20"/>
    </location>
</feature>
<feature type="propeptide" id="PRO_0000262661" evidence="3">
    <location>
        <begin position="21"/>
        <end position="33"/>
    </location>
</feature>
<feature type="chain" id="PRO_0000262662" description="U2-sicaritoxin-Li1a">
    <location>
        <begin position="34"/>
        <end position="86"/>
    </location>
</feature>
<feature type="disulfide bond" evidence="1">
    <location>
        <begin position="35"/>
        <end position="53"/>
    </location>
</feature>
<feature type="disulfide bond" evidence="1">
    <location>
        <begin position="42"/>
        <end position="62"/>
    </location>
</feature>
<feature type="disulfide bond" evidence="1">
    <location>
        <begin position="52"/>
        <end position="71"/>
    </location>
</feature>
<feature type="disulfide bond" evidence="1">
    <location>
        <begin position="64"/>
        <end position="69"/>
    </location>
</feature>